<name>RL22_STAES</name>
<evidence type="ECO:0000255" key="1">
    <source>
        <dbReference type="HAMAP-Rule" id="MF_01331"/>
    </source>
</evidence>
<evidence type="ECO:0000305" key="2"/>
<accession>Q8CRG5</accession>
<proteinExistence type="inferred from homology"/>
<gene>
    <name evidence="1" type="primary">rplV</name>
    <name type="ordered locus">SE_1819</name>
</gene>
<protein>
    <recommendedName>
        <fullName evidence="1">Large ribosomal subunit protein uL22</fullName>
    </recommendedName>
    <alternativeName>
        <fullName evidence="2">50S ribosomal protein L22</fullName>
    </alternativeName>
</protein>
<dbReference type="EMBL" id="AE015929">
    <property type="protein sequence ID" value="AAO05460.1"/>
    <property type="molecule type" value="Genomic_DNA"/>
</dbReference>
<dbReference type="RefSeq" id="NP_765374.1">
    <property type="nucleotide sequence ID" value="NC_004461.1"/>
</dbReference>
<dbReference type="RefSeq" id="WP_001829734.1">
    <property type="nucleotide sequence ID" value="NZ_WBME01000007.1"/>
</dbReference>
<dbReference type="SMR" id="Q8CRG5"/>
<dbReference type="GeneID" id="93780196"/>
<dbReference type="KEGG" id="sep:SE_1819"/>
<dbReference type="PATRIC" id="fig|176280.10.peg.1775"/>
<dbReference type="eggNOG" id="COG0091">
    <property type="taxonomic scope" value="Bacteria"/>
</dbReference>
<dbReference type="HOGENOM" id="CLU_083987_3_3_9"/>
<dbReference type="OrthoDB" id="9805969at2"/>
<dbReference type="PRO" id="PR:Q8CRG5"/>
<dbReference type="Proteomes" id="UP000001411">
    <property type="component" value="Chromosome"/>
</dbReference>
<dbReference type="GO" id="GO:0022625">
    <property type="term" value="C:cytosolic large ribosomal subunit"/>
    <property type="evidence" value="ECO:0007669"/>
    <property type="project" value="TreeGrafter"/>
</dbReference>
<dbReference type="GO" id="GO:0019843">
    <property type="term" value="F:rRNA binding"/>
    <property type="evidence" value="ECO:0007669"/>
    <property type="project" value="UniProtKB-UniRule"/>
</dbReference>
<dbReference type="GO" id="GO:0003735">
    <property type="term" value="F:structural constituent of ribosome"/>
    <property type="evidence" value="ECO:0007669"/>
    <property type="project" value="InterPro"/>
</dbReference>
<dbReference type="GO" id="GO:0006412">
    <property type="term" value="P:translation"/>
    <property type="evidence" value="ECO:0007669"/>
    <property type="project" value="UniProtKB-UniRule"/>
</dbReference>
<dbReference type="CDD" id="cd00336">
    <property type="entry name" value="Ribosomal_L22"/>
    <property type="match status" value="1"/>
</dbReference>
<dbReference type="FunFam" id="3.90.470.10:FF:000001">
    <property type="entry name" value="50S ribosomal protein L22"/>
    <property type="match status" value="1"/>
</dbReference>
<dbReference type="Gene3D" id="3.90.470.10">
    <property type="entry name" value="Ribosomal protein L22/L17"/>
    <property type="match status" value="1"/>
</dbReference>
<dbReference type="HAMAP" id="MF_01331_B">
    <property type="entry name" value="Ribosomal_uL22_B"/>
    <property type="match status" value="1"/>
</dbReference>
<dbReference type="InterPro" id="IPR001063">
    <property type="entry name" value="Ribosomal_uL22"/>
</dbReference>
<dbReference type="InterPro" id="IPR005727">
    <property type="entry name" value="Ribosomal_uL22_bac/chlpt-type"/>
</dbReference>
<dbReference type="InterPro" id="IPR047867">
    <property type="entry name" value="Ribosomal_uL22_bac/org-type"/>
</dbReference>
<dbReference type="InterPro" id="IPR018260">
    <property type="entry name" value="Ribosomal_uL22_CS"/>
</dbReference>
<dbReference type="InterPro" id="IPR036394">
    <property type="entry name" value="Ribosomal_uL22_sf"/>
</dbReference>
<dbReference type="NCBIfam" id="TIGR01044">
    <property type="entry name" value="rplV_bact"/>
    <property type="match status" value="1"/>
</dbReference>
<dbReference type="PANTHER" id="PTHR13501">
    <property type="entry name" value="CHLOROPLAST 50S RIBOSOMAL PROTEIN L22-RELATED"/>
    <property type="match status" value="1"/>
</dbReference>
<dbReference type="PANTHER" id="PTHR13501:SF8">
    <property type="entry name" value="LARGE RIBOSOMAL SUBUNIT PROTEIN UL22M"/>
    <property type="match status" value="1"/>
</dbReference>
<dbReference type="Pfam" id="PF00237">
    <property type="entry name" value="Ribosomal_L22"/>
    <property type="match status" value="1"/>
</dbReference>
<dbReference type="SUPFAM" id="SSF54843">
    <property type="entry name" value="Ribosomal protein L22"/>
    <property type="match status" value="1"/>
</dbReference>
<dbReference type="PROSITE" id="PS00464">
    <property type="entry name" value="RIBOSOMAL_L22"/>
    <property type="match status" value="1"/>
</dbReference>
<sequence length="117" mass="12821">MEAKAVARTIRIAPRKVRLVLDLIRGKNAGEAIAILKLTNKASSPVIEKVLMSALANAEHNYDMNTDELVVKEAYANEGPTLKRFRPRAQGRASAINKRTSHITIVVSDGKEEAKEA</sequence>
<reference key="1">
    <citation type="journal article" date="2003" name="Mol. Microbiol.">
        <title>Genome-based analysis of virulence genes in a non-biofilm-forming Staphylococcus epidermidis strain (ATCC 12228).</title>
        <authorList>
            <person name="Zhang Y.-Q."/>
            <person name="Ren S.-X."/>
            <person name="Li H.-L."/>
            <person name="Wang Y.-X."/>
            <person name="Fu G."/>
            <person name="Yang J."/>
            <person name="Qin Z.-Q."/>
            <person name="Miao Y.-G."/>
            <person name="Wang W.-Y."/>
            <person name="Chen R.-S."/>
            <person name="Shen Y."/>
            <person name="Chen Z."/>
            <person name="Yuan Z.-H."/>
            <person name="Zhao G.-P."/>
            <person name="Qu D."/>
            <person name="Danchin A."/>
            <person name="Wen Y.-M."/>
        </authorList>
    </citation>
    <scope>NUCLEOTIDE SEQUENCE [LARGE SCALE GENOMIC DNA]</scope>
    <source>
        <strain>ATCC 12228 / FDA PCI 1200</strain>
    </source>
</reference>
<comment type="function">
    <text evidence="1">This protein binds specifically to 23S rRNA; its binding is stimulated by other ribosomal proteins, e.g. L4, L17, and L20. It is important during the early stages of 50S assembly. It makes multiple contacts with different domains of the 23S rRNA in the assembled 50S subunit and ribosome (By similarity).</text>
</comment>
<comment type="function">
    <text evidence="1">The globular domain of the protein is located near the polypeptide exit tunnel on the outside of the subunit, while an extended beta-hairpin is found that lines the wall of the exit tunnel in the center of the 70S ribosome.</text>
</comment>
<comment type="subunit">
    <text evidence="1">Part of the 50S ribosomal subunit.</text>
</comment>
<comment type="similarity">
    <text evidence="1">Belongs to the universal ribosomal protein uL22 family.</text>
</comment>
<feature type="chain" id="PRO_0000125227" description="Large ribosomal subunit protein uL22">
    <location>
        <begin position="1"/>
        <end position="117"/>
    </location>
</feature>
<keyword id="KW-0687">Ribonucleoprotein</keyword>
<keyword id="KW-0689">Ribosomal protein</keyword>
<keyword id="KW-0694">RNA-binding</keyword>
<keyword id="KW-0699">rRNA-binding</keyword>
<organism>
    <name type="scientific">Staphylococcus epidermidis (strain ATCC 12228 / FDA PCI 1200)</name>
    <dbReference type="NCBI Taxonomy" id="176280"/>
    <lineage>
        <taxon>Bacteria</taxon>
        <taxon>Bacillati</taxon>
        <taxon>Bacillota</taxon>
        <taxon>Bacilli</taxon>
        <taxon>Bacillales</taxon>
        <taxon>Staphylococcaceae</taxon>
        <taxon>Staphylococcus</taxon>
    </lineage>
</organism>